<sequence>MIEIDGSYGEGGGQVVRTAVALSAVTGKDVKVTNIRKNRPNPGLKQQHLKALETAARICEARVSGLFPGSSELFFSPVEIKGGKYEVDIGTAGSITLLLQSLMPALPFAKEKVKLTIKGGTDVAWSPTIDYLQHVTLRALEQLGYAGIVTLKKRGYYPRGGGEVSAVFEPCKLRSFHFRRVKENRRTGEARREEETRNEGRNQNQRIEIQGISHASNLPAHVPARQAEAAESLLLEAGYGSRTKIQSFELLSTGSGITLWSGYCGGSALGKKGLPAEKVGRRAAEEIILELSSKAPVDVHLADQLIPYMALAGNSSYTVRELTLHAATNIWVTEQFLDVKFRIEEKEGLFEVSVD</sequence>
<organism>
    <name type="scientific">Methanosarcina acetivorans (strain ATCC 35395 / DSM 2834 / JCM 12185 / C2A)</name>
    <dbReference type="NCBI Taxonomy" id="188937"/>
    <lineage>
        <taxon>Archaea</taxon>
        <taxon>Methanobacteriati</taxon>
        <taxon>Methanobacteriota</taxon>
        <taxon>Stenosarchaea group</taxon>
        <taxon>Methanomicrobia</taxon>
        <taxon>Methanosarcinales</taxon>
        <taxon>Methanosarcinaceae</taxon>
        <taxon>Methanosarcina</taxon>
    </lineage>
</organism>
<protein>
    <recommendedName>
        <fullName evidence="1">RNA 3'-terminal phosphate cyclase</fullName>
        <shortName evidence="1">RNA cyclase</shortName>
        <shortName evidence="1">RNA-3'-phosphate cyclase</shortName>
        <ecNumber evidence="1">6.5.1.4</ecNumber>
    </recommendedName>
</protein>
<accession>Q8TH85</accession>
<keyword id="KW-0067">ATP-binding</keyword>
<keyword id="KW-0963">Cytoplasm</keyword>
<keyword id="KW-0436">Ligase</keyword>
<keyword id="KW-0547">Nucleotide-binding</keyword>
<keyword id="KW-1185">Reference proteome</keyword>
<proteinExistence type="inferred from homology"/>
<dbReference type="EC" id="6.5.1.4" evidence="1"/>
<dbReference type="EMBL" id="AE010299">
    <property type="protein sequence ID" value="AAM07971.1"/>
    <property type="molecule type" value="Genomic_DNA"/>
</dbReference>
<dbReference type="RefSeq" id="WP_011024505.1">
    <property type="nucleotide sequence ID" value="NC_003552.1"/>
</dbReference>
<dbReference type="SMR" id="Q8TH85"/>
<dbReference type="FunCoup" id="Q8TH85">
    <property type="interactions" value="162"/>
</dbReference>
<dbReference type="STRING" id="188937.MA_4637"/>
<dbReference type="EnsemblBacteria" id="AAM07971">
    <property type="protein sequence ID" value="AAM07971"/>
    <property type="gene ID" value="MA_4637"/>
</dbReference>
<dbReference type="GeneID" id="1476531"/>
<dbReference type="KEGG" id="mac:MA_4637"/>
<dbReference type="HOGENOM" id="CLU_027882_0_0_2"/>
<dbReference type="InParanoid" id="Q8TH85"/>
<dbReference type="OrthoDB" id="7994at2157"/>
<dbReference type="PhylomeDB" id="Q8TH85"/>
<dbReference type="Proteomes" id="UP000002487">
    <property type="component" value="Chromosome"/>
</dbReference>
<dbReference type="GO" id="GO:0005737">
    <property type="term" value="C:cytoplasm"/>
    <property type="evidence" value="ECO:0007669"/>
    <property type="project" value="UniProtKB-SubCell"/>
</dbReference>
<dbReference type="GO" id="GO:0005524">
    <property type="term" value="F:ATP binding"/>
    <property type="evidence" value="ECO:0007669"/>
    <property type="project" value="UniProtKB-KW"/>
</dbReference>
<dbReference type="GO" id="GO:0003963">
    <property type="term" value="F:RNA-3'-phosphate cyclase activity"/>
    <property type="evidence" value="ECO:0000318"/>
    <property type="project" value="GO_Central"/>
</dbReference>
<dbReference type="GO" id="GO:0006396">
    <property type="term" value="P:RNA processing"/>
    <property type="evidence" value="ECO:0007669"/>
    <property type="project" value="InterPro"/>
</dbReference>
<dbReference type="CDD" id="cd00874">
    <property type="entry name" value="RNA_Cyclase_Class_II"/>
    <property type="match status" value="1"/>
</dbReference>
<dbReference type="Gene3D" id="3.65.10.20">
    <property type="entry name" value="RNA 3'-terminal phosphate cyclase domain"/>
    <property type="match status" value="1"/>
</dbReference>
<dbReference type="Gene3D" id="3.30.360.20">
    <property type="entry name" value="RNA 3'-terminal phosphate cyclase, insert domain"/>
    <property type="match status" value="1"/>
</dbReference>
<dbReference type="HAMAP" id="MF_00200">
    <property type="entry name" value="RTC"/>
    <property type="match status" value="1"/>
</dbReference>
<dbReference type="InterPro" id="IPR013791">
    <property type="entry name" value="RNA3'-term_phos_cycl_insert"/>
</dbReference>
<dbReference type="InterPro" id="IPR023797">
    <property type="entry name" value="RNA3'_phos_cyclase_dom"/>
</dbReference>
<dbReference type="InterPro" id="IPR037136">
    <property type="entry name" value="RNA3'_phos_cyclase_dom_sf"/>
</dbReference>
<dbReference type="InterPro" id="IPR000228">
    <property type="entry name" value="RNA3'_term_phos_cyc"/>
</dbReference>
<dbReference type="InterPro" id="IPR017770">
    <property type="entry name" value="RNA3'_term_phos_cyc_type_1"/>
</dbReference>
<dbReference type="InterPro" id="IPR020719">
    <property type="entry name" value="RNA3'_term_phos_cycl-like_CS"/>
</dbReference>
<dbReference type="InterPro" id="IPR013792">
    <property type="entry name" value="RNA3'P_cycl/enolpyr_Trfase_a/b"/>
</dbReference>
<dbReference type="InterPro" id="IPR036553">
    <property type="entry name" value="RPTC_insert"/>
</dbReference>
<dbReference type="NCBIfam" id="TIGR03399">
    <property type="entry name" value="RNA_3prim_cycl"/>
    <property type="match status" value="1"/>
</dbReference>
<dbReference type="PANTHER" id="PTHR11096">
    <property type="entry name" value="RNA 3' TERMINAL PHOSPHATE CYCLASE"/>
    <property type="match status" value="1"/>
</dbReference>
<dbReference type="PANTHER" id="PTHR11096:SF0">
    <property type="entry name" value="RNA 3'-TERMINAL PHOSPHATE CYCLASE"/>
    <property type="match status" value="1"/>
</dbReference>
<dbReference type="Pfam" id="PF01137">
    <property type="entry name" value="RTC"/>
    <property type="match status" value="1"/>
</dbReference>
<dbReference type="Pfam" id="PF05189">
    <property type="entry name" value="RTC_insert"/>
    <property type="match status" value="1"/>
</dbReference>
<dbReference type="PIRSF" id="PIRSF005378">
    <property type="entry name" value="RNA3'_term_phos_cycl_euk"/>
    <property type="match status" value="1"/>
</dbReference>
<dbReference type="SUPFAM" id="SSF55205">
    <property type="entry name" value="EPT/RTPC-like"/>
    <property type="match status" value="2"/>
</dbReference>
<dbReference type="SUPFAM" id="SSF52913">
    <property type="entry name" value="RNA 3'-terminal phosphate cyclase, RPTC, insert domain"/>
    <property type="match status" value="1"/>
</dbReference>
<dbReference type="PROSITE" id="PS01287">
    <property type="entry name" value="RTC"/>
    <property type="match status" value="1"/>
</dbReference>
<name>RTCA_METAC</name>
<evidence type="ECO:0000255" key="1">
    <source>
        <dbReference type="HAMAP-Rule" id="MF_00200"/>
    </source>
</evidence>
<feature type="chain" id="PRO_0000156425" description="RNA 3'-terminal phosphate cyclase">
    <location>
        <begin position="1"/>
        <end position="355"/>
    </location>
</feature>
<feature type="active site" description="Tele-AMP-histidine intermediate" evidence="1">
    <location>
        <position position="325"/>
    </location>
</feature>
<feature type="binding site" evidence="1">
    <location>
        <position position="100"/>
    </location>
    <ligand>
        <name>ATP</name>
        <dbReference type="ChEBI" id="CHEBI:30616"/>
    </ligand>
</feature>
<feature type="binding site" evidence="1">
    <location>
        <begin position="300"/>
        <end position="304"/>
    </location>
    <ligand>
        <name>ATP</name>
        <dbReference type="ChEBI" id="CHEBI:30616"/>
    </ligand>
</feature>
<comment type="function">
    <text evidence="1">Catalyzes the conversion of 3'-phosphate to a 2',3'-cyclic phosphodiester at the end of RNA. The mechanism of action of the enzyme occurs in 3 steps: (A) adenylation of the enzyme by ATP; (B) transfer of adenylate to an RNA-N3'P to produce RNA-N3'PP5'A; (C) and attack of the adjacent 2'-hydroxyl on the 3'-phosphorus in the diester linkage to produce the cyclic end product. The biological role of this enzyme is unknown but it is likely to function in some aspects of cellular RNA processing.</text>
</comment>
<comment type="catalytic activity">
    <reaction evidence="1">
        <text>a 3'-end 3'-phospho-ribonucleotide-RNA + ATP = a 3'-end 2',3'-cyclophospho-ribonucleotide-RNA + AMP + diphosphate</text>
        <dbReference type="Rhea" id="RHEA:23976"/>
        <dbReference type="Rhea" id="RHEA-COMP:10463"/>
        <dbReference type="Rhea" id="RHEA-COMP:10464"/>
        <dbReference type="ChEBI" id="CHEBI:30616"/>
        <dbReference type="ChEBI" id="CHEBI:33019"/>
        <dbReference type="ChEBI" id="CHEBI:83062"/>
        <dbReference type="ChEBI" id="CHEBI:83064"/>
        <dbReference type="ChEBI" id="CHEBI:456215"/>
        <dbReference type="EC" id="6.5.1.4"/>
    </reaction>
</comment>
<comment type="subcellular location">
    <subcellularLocation>
        <location evidence="1">Cytoplasm</location>
    </subcellularLocation>
</comment>
<comment type="similarity">
    <text evidence="1">Belongs to the RNA 3'-terminal cyclase family. Type 1 subfamily.</text>
</comment>
<gene>
    <name evidence="1" type="primary">rtcA</name>
    <name type="ordered locus">MA_4637</name>
</gene>
<reference key="1">
    <citation type="journal article" date="2002" name="Genome Res.">
        <title>The genome of Methanosarcina acetivorans reveals extensive metabolic and physiological diversity.</title>
        <authorList>
            <person name="Galagan J.E."/>
            <person name="Nusbaum C."/>
            <person name="Roy A."/>
            <person name="Endrizzi M.G."/>
            <person name="Macdonald P."/>
            <person name="FitzHugh W."/>
            <person name="Calvo S."/>
            <person name="Engels R."/>
            <person name="Smirnov S."/>
            <person name="Atnoor D."/>
            <person name="Brown A."/>
            <person name="Allen N."/>
            <person name="Naylor J."/>
            <person name="Stange-Thomann N."/>
            <person name="DeArellano K."/>
            <person name="Johnson R."/>
            <person name="Linton L."/>
            <person name="McEwan P."/>
            <person name="McKernan K."/>
            <person name="Talamas J."/>
            <person name="Tirrell A."/>
            <person name="Ye W."/>
            <person name="Zimmer A."/>
            <person name="Barber R.D."/>
            <person name="Cann I."/>
            <person name="Graham D.E."/>
            <person name="Grahame D.A."/>
            <person name="Guss A.M."/>
            <person name="Hedderich R."/>
            <person name="Ingram-Smith C."/>
            <person name="Kuettner H.C."/>
            <person name="Krzycki J.A."/>
            <person name="Leigh J.A."/>
            <person name="Li W."/>
            <person name="Liu J."/>
            <person name="Mukhopadhyay B."/>
            <person name="Reeve J.N."/>
            <person name="Smith K."/>
            <person name="Springer T.A."/>
            <person name="Umayam L.A."/>
            <person name="White O."/>
            <person name="White R.H."/>
            <person name="de Macario E.C."/>
            <person name="Ferry J.G."/>
            <person name="Jarrell K.F."/>
            <person name="Jing H."/>
            <person name="Macario A.J.L."/>
            <person name="Paulsen I.T."/>
            <person name="Pritchett M."/>
            <person name="Sowers K.R."/>
            <person name="Swanson R.V."/>
            <person name="Zinder S.H."/>
            <person name="Lander E."/>
            <person name="Metcalf W.W."/>
            <person name="Birren B."/>
        </authorList>
    </citation>
    <scope>NUCLEOTIDE SEQUENCE [LARGE SCALE GENOMIC DNA]</scope>
    <source>
        <strain>ATCC 35395 / DSM 2834 / JCM 12185 / C2A</strain>
    </source>
</reference>